<feature type="chain" id="PRO_0000189742" description="Gamma-glutamyl phosphate reductase">
    <location>
        <begin position="1"/>
        <end position="416"/>
    </location>
</feature>
<evidence type="ECO:0000255" key="1">
    <source>
        <dbReference type="HAMAP-Rule" id="MF_00412"/>
    </source>
</evidence>
<protein>
    <recommendedName>
        <fullName evidence="1">Gamma-glutamyl phosphate reductase</fullName>
        <shortName evidence="1">GPR</shortName>
        <ecNumber evidence="1">1.2.1.41</ecNumber>
    </recommendedName>
    <alternativeName>
        <fullName evidence="1">Glutamate-5-semialdehyde dehydrogenase</fullName>
    </alternativeName>
    <alternativeName>
        <fullName evidence="1">Glutamyl-gamma-semialdehyde dehydrogenase</fullName>
        <shortName evidence="1">GSA dehydrogenase</shortName>
    </alternativeName>
</protein>
<sequence>MKEIEYVQDLCSRAKKASKVLKQLSSSKKNKILLSLADLLEKRKAEILLANELDLKDGKEKKLSSALMDRLLLNEKRIFSMASAVREIAALPDPIGEVTRGITLPNGLELVTRRVPLGVVMVIYESRPNVTIDVGALSFKSGNACILRGGSEAFYSNEILIKLFHEILIKEEIDIGSVVFVDKTDRSFMIPFFQQTSLIDIVVPRGGEGLIRFVSENSKIPVVKHDKGVCNLYIDQDADPEKVIPIVINSKVQRPGVCNSTENLILHNGYPFRKELLEALAKEGVELLLDPSSLALYPKGKPVKQQDYLEEFLDLRLSVKTVSSLEEALAFIEKTSSGHTEAIVTEDLNTARIFTNSLDSAALFINCSTRFHDGGEFGLGAEVGISTGKLHVRGPMGLVHLTTTTTYVTGNGQIRG</sequence>
<proteinExistence type="inferred from homology"/>
<reference key="1">
    <citation type="journal article" date="2004" name="J. Bacteriol.">
        <title>Comparative genomics of two Leptospira interrogans serovars reveals novel insights into physiology and pathogenesis.</title>
        <authorList>
            <person name="Nascimento A.L.T.O."/>
            <person name="Ko A.I."/>
            <person name="Martins E.A.L."/>
            <person name="Monteiro-Vitorello C.B."/>
            <person name="Ho P.L."/>
            <person name="Haake D.A."/>
            <person name="Verjovski-Almeida S."/>
            <person name="Hartskeerl R.A."/>
            <person name="Marques M.V."/>
            <person name="Oliveira M.C."/>
            <person name="Menck C.F.M."/>
            <person name="Leite L.C.C."/>
            <person name="Carrer H."/>
            <person name="Coutinho L.L."/>
            <person name="Degrave W.M."/>
            <person name="Dellagostin O.A."/>
            <person name="El-Dorry H."/>
            <person name="Ferro E.S."/>
            <person name="Ferro M.I.T."/>
            <person name="Furlan L.R."/>
            <person name="Gamberini M."/>
            <person name="Giglioti E.A."/>
            <person name="Goes-Neto A."/>
            <person name="Goldman G.H."/>
            <person name="Goldman M.H.S."/>
            <person name="Harakava R."/>
            <person name="Jeronimo S.M.B."/>
            <person name="Junqueira-de-Azevedo I.L.M."/>
            <person name="Kimura E.T."/>
            <person name="Kuramae E.E."/>
            <person name="Lemos E.G.M."/>
            <person name="Lemos M.V.F."/>
            <person name="Marino C.L."/>
            <person name="Nunes L.R."/>
            <person name="de Oliveira R.C."/>
            <person name="Pereira G.G."/>
            <person name="Reis M.S."/>
            <person name="Schriefer A."/>
            <person name="Siqueira W.J."/>
            <person name="Sommer P."/>
            <person name="Tsai S.M."/>
            <person name="Simpson A.J.G."/>
            <person name="Ferro J.A."/>
            <person name="Camargo L.E.A."/>
            <person name="Kitajima J.P."/>
            <person name="Setubal J.C."/>
            <person name="Van Sluys M.A."/>
        </authorList>
    </citation>
    <scope>NUCLEOTIDE SEQUENCE [LARGE SCALE GENOMIC DNA]</scope>
    <source>
        <strain>Fiocruz L1-130</strain>
    </source>
</reference>
<comment type="function">
    <text evidence="1">Catalyzes the NADPH-dependent reduction of L-glutamate 5-phosphate into L-glutamate 5-semialdehyde and phosphate. The product spontaneously undergoes cyclization to form 1-pyrroline-5-carboxylate.</text>
</comment>
<comment type="catalytic activity">
    <reaction evidence="1">
        <text>L-glutamate 5-semialdehyde + phosphate + NADP(+) = L-glutamyl 5-phosphate + NADPH + H(+)</text>
        <dbReference type="Rhea" id="RHEA:19541"/>
        <dbReference type="ChEBI" id="CHEBI:15378"/>
        <dbReference type="ChEBI" id="CHEBI:43474"/>
        <dbReference type="ChEBI" id="CHEBI:57783"/>
        <dbReference type="ChEBI" id="CHEBI:58066"/>
        <dbReference type="ChEBI" id="CHEBI:58274"/>
        <dbReference type="ChEBI" id="CHEBI:58349"/>
        <dbReference type="EC" id="1.2.1.41"/>
    </reaction>
</comment>
<comment type="pathway">
    <text evidence="1">Amino-acid biosynthesis; L-proline biosynthesis; L-glutamate 5-semialdehyde from L-glutamate: step 2/2.</text>
</comment>
<comment type="subcellular location">
    <subcellularLocation>
        <location evidence="1">Cytoplasm</location>
    </subcellularLocation>
</comment>
<comment type="similarity">
    <text evidence="1">Belongs to the gamma-glutamyl phosphate reductase family.</text>
</comment>
<keyword id="KW-0028">Amino-acid biosynthesis</keyword>
<keyword id="KW-0963">Cytoplasm</keyword>
<keyword id="KW-0521">NADP</keyword>
<keyword id="KW-0560">Oxidoreductase</keyword>
<keyword id="KW-0641">Proline biosynthesis</keyword>
<organism>
    <name type="scientific">Leptospira interrogans serogroup Icterohaemorrhagiae serovar copenhageni (strain Fiocruz L1-130)</name>
    <dbReference type="NCBI Taxonomy" id="267671"/>
    <lineage>
        <taxon>Bacteria</taxon>
        <taxon>Pseudomonadati</taxon>
        <taxon>Spirochaetota</taxon>
        <taxon>Spirochaetia</taxon>
        <taxon>Leptospirales</taxon>
        <taxon>Leptospiraceae</taxon>
        <taxon>Leptospira</taxon>
    </lineage>
</organism>
<dbReference type="EC" id="1.2.1.41" evidence="1"/>
<dbReference type="EMBL" id="AE016823">
    <property type="protein sequence ID" value="AAS71327.1"/>
    <property type="molecule type" value="Genomic_DNA"/>
</dbReference>
<dbReference type="RefSeq" id="WP_000658458.1">
    <property type="nucleotide sequence ID" value="NC_005823.1"/>
</dbReference>
<dbReference type="SMR" id="Q72NQ9"/>
<dbReference type="KEGG" id="lic:LIC_12771"/>
<dbReference type="HOGENOM" id="CLU_030231_0_0_12"/>
<dbReference type="UniPathway" id="UPA00098">
    <property type="reaction ID" value="UER00360"/>
</dbReference>
<dbReference type="Proteomes" id="UP000007037">
    <property type="component" value="Chromosome I"/>
</dbReference>
<dbReference type="GO" id="GO:0005737">
    <property type="term" value="C:cytoplasm"/>
    <property type="evidence" value="ECO:0007669"/>
    <property type="project" value="UniProtKB-SubCell"/>
</dbReference>
<dbReference type="GO" id="GO:0004350">
    <property type="term" value="F:glutamate-5-semialdehyde dehydrogenase activity"/>
    <property type="evidence" value="ECO:0007669"/>
    <property type="project" value="UniProtKB-UniRule"/>
</dbReference>
<dbReference type="GO" id="GO:0050661">
    <property type="term" value="F:NADP binding"/>
    <property type="evidence" value="ECO:0007669"/>
    <property type="project" value="InterPro"/>
</dbReference>
<dbReference type="GO" id="GO:0055129">
    <property type="term" value="P:L-proline biosynthetic process"/>
    <property type="evidence" value="ECO:0007669"/>
    <property type="project" value="UniProtKB-UniRule"/>
</dbReference>
<dbReference type="CDD" id="cd07079">
    <property type="entry name" value="ALDH_F18-19_ProA-GPR"/>
    <property type="match status" value="1"/>
</dbReference>
<dbReference type="FunFam" id="3.40.309.10:FF:000028">
    <property type="entry name" value="Gamma-glutamyl phosphate reductase"/>
    <property type="match status" value="1"/>
</dbReference>
<dbReference type="Gene3D" id="3.40.605.10">
    <property type="entry name" value="Aldehyde Dehydrogenase, Chain A, domain 1"/>
    <property type="match status" value="1"/>
</dbReference>
<dbReference type="Gene3D" id="3.40.309.10">
    <property type="entry name" value="Aldehyde Dehydrogenase, Chain A, domain 2"/>
    <property type="match status" value="1"/>
</dbReference>
<dbReference type="HAMAP" id="MF_00412">
    <property type="entry name" value="ProA"/>
    <property type="match status" value="1"/>
</dbReference>
<dbReference type="InterPro" id="IPR016161">
    <property type="entry name" value="Ald_DH/histidinol_DH"/>
</dbReference>
<dbReference type="InterPro" id="IPR016163">
    <property type="entry name" value="Ald_DH_C"/>
</dbReference>
<dbReference type="InterPro" id="IPR016162">
    <property type="entry name" value="Ald_DH_N"/>
</dbReference>
<dbReference type="InterPro" id="IPR015590">
    <property type="entry name" value="Aldehyde_DH_dom"/>
</dbReference>
<dbReference type="InterPro" id="IPR020593">
    <property type="entry name" value="G-glutamylP_reductase_CS"/>
</dbReference>
<dbReference type="InterPro" id="IPR012134">
    <property type="entry name" value="Glu-5-SA_DH"/>
</dbReference>
<dbReference type="InterPro" id="IPR000965">
    <property type="entry name" value="GPR_dom"/>
</dbReference>
<dbReference type="NCBIfam" id="NF001221">
    <property type="entry name" value="PRK00197.1"/>
    <property type="match status" value="1"/>
</dbReference>
<dbReference type="NCBIfam" id="TIGR00407">
    <property type="entry name" value="proA"/>
    <property type="match status" value="1"/>
</dbReference>
<dbReference type="PANTHER" id="PTHR11063:SF8">
    <property type="entry name" value="DELTA-1-PYRROLINE-5-CARBOXYLATE SYNTHASE"/>
    <property type="match status" value="1"/>
</dbReference>
<dbReference type="PANTHER" id="PTHR11063">
    <property type="entry name" value="GLUTAMATE SEMIALDEHYDE DEHYDROGENASE"/>
    <property type="match status" value="1"/>
</dbReference>
<dbReference type="Pfam" id="PF00171">
    <property type="entry name" value="Aldedh"/>
    <property type="match status" value="1"/>
</dbReference>
<dbReference type="PIRSF" id="PIRSF000151">
    <property type="entry name" value="GPR"/>
    <property type="match status" value="1"/>
</dbReference>
<dbReference type="SUPFAM" id="SSF53720">
    <property type="entry name" value="ALDH-like"/>
    <property type="match status" value="1"/>
</dbReference>
<dbReference type="PROSITE" id="PS01223">
    <property type="entry name" value="PROA"/>
    <property type="match status" value="1"/>
</dbReference>
<accession>Q72NQ9</accession>
<gene>
    <name evidence="1" type="primary">proA</name>
    <name type="ordered locus">LIC_12771</name>
</gene>
<name>PROA_LEPIC</name>